<feature type="chain" id="PRO_0000338783" description="Translation initiation factor IF-1 1">
    <location>
        <begin position="1"/>
        <end position="88"/>
    </location>
</feature>
<feature type="domain" description="S1-like" evidence="1">
    <location>
        <begin position="1"/>
        <end position="72"/>
    </location>
</feature>
<sequence length="88" mass="10078">MAKEELIELDGIVDEVLPDSRYRVTLDNGVVVGAYASGQMRRHRIRILAGDRVTLELSVYDLTKGRINFRHKDERRSDAAPRASARRR</sequence>
<keyword id="KW-0963">Cytoplasm</keyword>
<keyword id="KW-0396">Initiation factor</keyword>
<keyword id="KW-0648">Protein biosynthesis</keyword>
<keyword id="KW-0694">RNA-binding</keyword>
<keyword id="KW-0699">rRNA-binding</keyword>
<proteinExistence type="inferred from homology"/>
<evidence type="ECO:0000255" key="1">
    <source>
        <dbReference type="HAMAP-Rule" id="MF_00075"/>
    </source>
</evidence>
<protein>
    <recommendedName>
        <fullName evidence="1">Translation initiation factor IF-1 1</fullName>
    </recommendedName>
</protein>
<name>IF11_BURP0</name>
<comment type="function">
    <text evidence="1">One of the essential components for the initiation of protein synthesis. Stabilizes the binding of IF-2 and IF-3 on the 30S subunit to which N-formylmethionyl-tRNA(fMet) subsequently binds. Helps modulate mRNA selection, yielding the 30S pre-initiation complex (PIC). Upon addition of the 50S ribosomal subunit IF-1, IF-2 and IF-3 are released leaving the mature 70S translation initiation complex.</text>
</comment>
<comment type="subunit">
    <text evidence="1">Component of the 30S ribosomal translation pre-initiation complex which assembles on the 30S ribosome in the order IF-2 and IF-3, IF-1 and N-formylmethionyl-tRNA(fMet); mRNA recruitment can occur at any time during PIC assembly.</text>
</comment>
<comment type="subcellular location">
    <subcellularLocation>
        <location evidence="1">Cytoplasm</location>
    </subcellularLocation>
</comment>
<comment type="similarity">
    <text evidence="1">Belongs to the IF-1 family.</text>
</comment>
<organism>
    <name type="scientific">Burkholderia pseudomallei (strain 1106a)</name>
    <dbReference type="NCBI Taxonomy" id="357348"/>
    <lineage>
        <taxon>Bacteria</taxon>
        <taxon>Pseudomonadati</taxon>
        <taxon>Pseudomonadota</taxon>
        <taxon>Betaproteobacteria</taxon>
        <taxon>Burkholderiales</taxon>
        <taxon>Burkholderiaceae</taxon>
        <taxon>Burkholderia</taxon>
        <taxon>pseudomallei group</taxon>
    </lineage>
</organism>
<reference key="1">
    <citation type="journal article" date="2010" name="Genome Biol. Evol.">
        <title>Continuing evolution of Burkholderia mallei through genome reduction and large-scale rearrangements.</title>
        <authorList>
            <person name="Losada L."/>
            <person name="Ronning C.M."/>
            <person name="DeShazer D."/>
            <person name="Woods D."/>
            <person name="Fedorova N."/>
            <person name="Kim H.S."/>
            <person name="Shabalina S.A."/>
            <person name="Pearson T.R."/>
            <person name="Brinkac L."/>
            <person name="Tan P."/>
            <person name="Nandi T."/>
            <person name="Crabtree J."/>
            <person name="Badger J."/>
            <person name="Beckstrom-Sternberg S."/>
            <person name="Saqib M."/>
            <person name="Schutzer S.E."/>
            <person name="Keim P."/>
            <person name="Nierman W.C."/>
        </authorList>
    </citation>
    <scope>NUCLEOTIDE SEQUENCE [LARGE SCALE GENOMIC DNA]</scope>
    <source>
        <strain>1106a</strain>
    </source>
</reference>
<gene>
    <name evidence="1" type="primary">infA1</name>
    <name type="ordered locus">BURPS1106A_1139</name>
</gene>
<accession>A3NSU7</accession>
<dbReference type="EMBL" id="CP000572">
    <property type="protein sequence ID" value="ABN89001.1"/>
    <property type="molecule type" value="Genomic_DNA"/>
</dbReference>
<dbReference type="SMR" id="A3NSU7"/>
<dbReference type="KEGG" id="bpl:BURPS1106A_1139"/>
<dbReference type="HOGENOM" id="CLU_151267_4_1_4"/>
<dbReference type="Proteomes" id="UP000006738">
    <property type="component" value="Chromosome I"/>
</dbReference>
<dbReference type="GO" id="GO:0005829">
    <property type="term" value="C:cytosol"/>
    <property type="evidence" value="ECO:0007669"/>
    <property type="project" value="TreeGrafter"/>
</dbReference>
<dbReference type="GO" id="GO:0043022">
    <property type="term" value="F:ribosome binding"/>
    <property type="evidence" value="ECO:0007669"/>
    <property type="project" value="UniProtKB-UniRule"/>
</dbReference>
<dbReference type="GO" id="GO:0019843">
    <property type="term" value="F:rRNA binding"/>
    <property type="evidence" value="ECO:0007669"/>
    <property type="project" value="UniProtKB-UniRule"/>
</dbReference>
<dbReference type="GO" id="GO:0003743">
    <property type="term" value="F:translation initiation factor activity"/>
    <property type="evidence" value="ECO:0007669"/>
    <property type="project" value="UniProtKB-UniRule"/>
</dbReference>
<dbReference type="CDD" id="cd04451">
    <property type="entry name" value="S1_IF1"/>
    <property type="match status" value="1"/>
</dbReference>
<dbReference type="FunFam" id="2.40.50.140:FF:000002">
    <property type="entry name" value="Translation initiation factor IF-1"/>
    <property type="match status" value="1"/>
</dbReference>
<dbReference type="Gene3D" id="2.40.50.140">
    <property type="entry name" value="Nucleic acid-binding proteins"/>
    <property type="match status" value="1"/>
</dbReference>
<dbReference type="HAMAP" id="MF_00075">
    <property type="entry name" value="IF_1"/>
    <property type="match status" value="1"/>
</dbReference>
<dbReference type="InterPro" id="IPR012340">
    <property type="entry name" value="NA-bd_OB-fold"/>
</dbReference>
<dbReference type="InterPro" id="IPR006196">
    <property type="entry name" value="RNA-binding_domain_S1_IF1"/>
</dbReference>
<dbReference type="InterPro" id="IPR003029">
    <property type="entry name" value="S1_domain"/>
</dbReference>
<dbReference type="InterPro" id="IPR004368">
    <property type="entry name" value="TIF_IF1"/>
</dbReference>
<dbReference type="NCBIfam" id="TIGR00008">
    <property type="entry name" value="infA"/>
    <property type="match status" value="1"/>
</dbReference>
<dbReference type="PANTHER" id="PTHR33370">
    <property type="entry name" value="TRANSLATION INITIATION FACTOR IF-1, CHLOROPLASTIC"/>
    <property type="match status" value="1"/>
</dbReference>
<dbReference type="PANTHER" id="PTHR33370:SF1">
    <property type="entry name" value="TRANSLATION INITIATION FACTOR IF-1, CHLOROPLASTIC"/>
    <property type="match status" value="1"/>
</dbReference>
<dbReference type="Pfam" id="PF01176">
    <property type="entry name" value="eIF-1a"/>
    <property type="match status" value="1"/>
</dbReference>
<dbReference type="SMART" id="SM00316">
    <property type="entry name" value="S1"/>
    <property type="match status" value="1"/>
</dbReference>
<dbReference type="SUPFAM" id="SSF50249">
    <property type="entry name" value="Nucleic acid-binding proteins"/>
    <property type="match status" value="1"/>
</dbReference>
<dbReference type="PROSITE" id="PS50832">
    <property type="entry name" value="S1_IF1_TYPE"/>
    <property type="match status" value="1"/>
</dbReference>